<organism>
    <name type="scientific">Mycobacterium tuberculosis (strain ATCC 25618 / H37Rv)</name>
    <dbReference type="NCBI Taxonomy" id="83332"/>
    <lineage>
        <taxon>Bacteria</taxon>
        <taxon>Bacillati</taxon>
        <taxon>Actinomycetota</taxon>
        <taxon>Actinomycetes</taxon>
        <taxon>Mycobacteriales</taxon>
        <taxon>Mycobacteriaceae</taxon>
        <taxon>Mycobacterium</taxon>
        <taxon>Mycobacterium tuberculosis complex</taxon>
    </lineage>
</organism>
<gene>
    <name type="primary">rpsL</name>
    <name type="synonym">rps12</name>
    <name type="ordered locus">Rv0682</name>
    <name type="ORF">MTV040.10</name>
</gene>
<sequence>MPTIQQLVRKGRRDKISKVKTAALKGSPQRRGVCTRVYTTTPKKPNSALRKVARVKLTSQVEVTAYIPGEGHNLQEHSMVLVRGGRVKDLPGVRYKIIRGSLDTQGVKNRKQARSRYGAKKEKG</sequence>
<dbReference type="EMBL" id="X70995">
    <property type="protein sequence ID" value="CAA50323.1"/>
    <property type="molecule type" value="Genomic_DNA"/>
</dbReference>
<dbReference type="EMBL" id="L08011">
    <property type="protein sequence ID" value="AAA66176.1"/>
    <property type="molecule type" value="Genomic_DNA"/>
</dbReference>
<dbReference type="EMBL" id="AL123456">
    <property type="protein sequence ID" value="CCP43425.1"/>
    <property type="molecule type" value="Genomic_DNA"/>
</dbReference>
<dbReference type="EMBL" id="AF398879">
    <property type="protein sequence ID" value="AAK83385.1"/>
    <property type="molecule type" value="Genomic_DNA"/>
</dbReference>
<dbReference type="EMBL" id="AF398880">
    <property type="protein sequence ID" value="AAK83386.1"/>
    <property type="molecule type" value="Genomic_DNA"/>
</dbReference>
<dbReference type="EMBL" id="AF398881">
    <property type="protein sequence ID" value="AAK83387.1"/>
    <property type="molecule type" value="Genomic_DNA"/>
</dbReference>
<dbReference type="EMBL" id="AF398882">
    <property type="protein sequence ID" value="AAK83388.1"/>
    <property type="molecule type" value="Genomic_DNA"/>
</dbReference>
<dbReference type="EMBL" id="AY156729">
    <property type="protein sequence ID" value="AAN52761.1"/>
    <property type="molecule type" value="Genomic_DNA"/>
</dbReference>
<dbReference type="EMBL" id="AY156730">
    <property type="protein sequence ID" value="AAN52762.1"/>
    <property type="molecule type" value="Genomic_DNA"/>
</dbReference>
<dbReference type="EMBL" id="AY156732">
    <property type="protein sequence ID" value="AAN52764.1"/>
    <property type="molecule type" value="Genomic_DNA"/>
</dbReference>
<dbReference type="EMBL" id="AY156733">
    <property type="protein sequence ID" value="AAN52765.1"/>
    <property type="molecule type" value="Genomic_DNA"/>
</dbReference>
<dbReference type="EMBL" id="AF367438">
    <property type="protein sequence ID" value="AAK53753.1"/>
    <property type="molecule type" value="Genomic_DNA"/>
</dbReference>
<dbReference type="PIR" id="S39591">
    <property type="entry name" value="S39591"/>
</dbReference>
<dbReference type="RefSeq" id="NP_215196.1">
    <property type="nucleotide sequence ID" value="NC_000962.3"/>
</dbReference>
<dbReference type="RefSeq" id="WP_003403453.1">
    <property type="nucleotide sequence ID" value="NZ_NVQJ01000007.1"/>
</dbReference>
<dbReference type="PDB" id="5V93">
    <property type="method" value="EM"/>
    <property type="resolution" value="4.00 A"/>
    <property type="chains" value="l=1-124"/>
</dbReference>
<dbReference type="PDB" id="7KGB">
    <property type="method" value="EM"/>
    <property type="resolution" value="2.70 A"/>
    <property type="chains" value="l=1-124"/>
</dbReference>
<dbReference type="PDB" id="7MSC">
    <property type="method" value="EM"/>
    <property type="resolution" value="2.97 A"/>
    <property type="chains" value="l=1-124"/>
</dbReference>
<dbReference type="PDB" id="7MSH">
    <property type="method" value="EM"/>
    <property type="resolution" value="3.23 A"/>
    <property type="chains" value="l=1-124"/>
</dbReference>
<dbReference type="PDB" id="7MSM">
    <property type="method" value="EM"/>
    <property type="resolution" value="2.79 A"/>
    <property type="chains" value="l=1-124"/>
</dbReference>
<dbReference type="PDB" id="7MSZ">
    <property type="method" value="EM"/>
    <property type="resolution" value="3.10 A"/>
    <property type="chains" value="l=1-124"/>
</dbReference>
<dbReference type="PDB" id="7MT2">
    <property type="method" value="EM"/>
    <property type="resolution" value="2.76 A"/>
    <property type="chains" value="l=1-124"/>
</dbReference>
<dbReference type="PDB" id="7MT3">
    <property type="method" value="EM"/>
    <property type="resolution" value="2.80 A"/>
    <property type="chains" value="l=1-124"/>
</dbReference>
<dbReference type="PDB" id="7MT7">
    <property type="method" value="EM"/>
    <property type="resolution" value="2.71 A"/>
    <property type="chains" value="l=1-124"/>
</dbReference>
<dbReference type="PDB" id="7SFR">
    <property type="method" value="EM"/>
    <property type="resolution" value="2.60 A"/>
    <property type="chains" value="l=1-124"/>
</dbReference>
<dbReference type="PDBsum" id="5V93"/>
<dbReference type="PDBsum" id="7KGB"/>
<dbReference type="PDBsum" id="7MSC"/>
<dbReference type="PDBsum" id="7MSH"/>
<dbReference type="PDBsum" id="7MSM"/>
<dbReference type="PDBsum" id="7MSZ"/>
<dbReference type="PDBsum" id="7MT2"/>
<dbReference type="PDBsum" id="7MT3"/>
<dbReference type="PDBsum" id="7MT7"/>
<dbReference type="PDBsum" id="7SFR"/>
<dbReference type="EMDB" id="EMD-22865"/>
<dbReference type="EMDB" id="EMD-23961"/>
<dbReference type="EMDB" id="EMD-23962"/>
<dbReference type="EMDB" id="EMD-23969"/>
<dbReference type="EMDB" id="EMD-23972"/>
<dbReference type="EMDB" id="EMD-23974"/>
<dbReference type="EMDB" id="EMD-23975"/>
<dbReference type="EMDB" id="EMD-23976"/>
<dbReference type="EMDB" id="EMD-8645"/>
<dbReference type="SMR" id="P9WH63"/>
<dbReference type="FunCoup" id="P9WH63">
    <property type="interactions" value="370"/>
</dbReference>
<dbReference type="STRING" id="83332.Rv0682"/>
<dbReference type="PaxDb" id="83332-Rv0682"/>
<dbReference type="DNASU" id="888259"/>
<dbReference type="GeneID" id="45424644"/>
<dbReference type="GeneID" id="888259"/>
<dbReference type="KEGG" id="mtu:Rv0682"/>
<dbReference type="KEGG" id="mtv:RVBD_0682"/>
<dbReference type="TubercuList" id="Rv0682"/>
<dbReference type="eggNOG" id="COG0048">
    <property type="taxonomic scope" value="Bacteria"/>
</dbReference>
<dbReference type="InParanoid" id="P9WH63"/>
<dbReference type="OrthoDB" id="9802366at2"/>
<dbReference type="PhylomeDB" id="P9WH63"/>
<dbReference type="PRO" id="PR:P9WH63"/>
<dbReference type="Proteomes" id="UP000001584">
    <property type="component" value="Chromosome"/>
</dbReference>
<dbReference type="GO" id="GO:0005840">
    <property type="term" value="C:ribosome"/>
    <property type="evidence" value="ECO:0000318"/>
    <property type="project" value="GO_Central"/>
</dbReference>
<dbReference type="GO" id="GO:0015935">
    <property type="term" value="C:small ribosomal subunit"/>
    <property type="evidence" value="ECO:0007669"/>
    <property type="project" value="InterPro"/>
</dbReference>
<dbReference type="GO" id="GO:0019843">
    <property type="term" value="F:rRNA binding"/>
    <property type="evidence" value="ECO:0007669"/>
    <property type="project" value="UniProtKB-UniRule"/>
</dbReference>
<dbReference type="GO" id="GO:0003735">
    <property type="term" value="F:structural constituent of ribosome"/>
    <property type="evidence" value="ECO:0000318"/>
    <property type="project" value="GO_Central"/>
</dbReference>
<dbReference type="GO" id="GO:0000049">
    <property type="term" value="F:tRNA binding"/>
    <property type="evidence" value="ECO:0007669"/>
    <property type="project" value="UniProtKB-UniRule"/>
</dbReference>
<dbReference type="GO" id="GO:0046677">
    <property type="term" value="P:response to antibiotic"/>
    <property type="evidence" value="ECO:0007669"/>
    <property type="project" value="UniProtKB-KW"/>
</dbReference>
<dbReference type="GO" id="GO:0006412">
    <property type="term" value="P:translation"/>
    <property type="evidence" value="ECO:0000318"/>
    <property type="project" value="GO_Central"/>
</dbReference>
<dbReference type="CDD" id="cd03368">
    <property type="entry name" value="Ribosomal_S12"/>
    <property type="match status" value="1"/>
</dbReference>
<dbReference type="FunFam" id="2.40.50.140:FF:000001">
    <property type="entry name" value="30S ribosomal protein S12"/>
    <property type="match status" value="1"/>
</dbReference>
<dbReference type="Gene3D" id="2.40.50.140">
    <property type="entry name" value="Nucleic acid-binding proteins"/>
    <property type="match status" value="1"/>
</dbReference>
<dbReference type="HAMAP" id="MF_00403_B">
    <property type="entry name" value="Ribosomal_uS12_B"/>
    <property type="match status" value="1"/>
</dbReference>
<dbReference type="InterPro" id="IPR012340">
    <property type="entry name" value="NA-bd_OB-fold"/>
</dbReference>
<dbReference type="InterPro" id="IPR006032">
    <property type="entry name" value="Ribosomal_uS12"/>
</dbReference>
<dbReference type="InterPro" id="IPR005679">
    <property type="entry name" value="Ribosomal_uS12_bac"/>
</dbReference>
<dbReference type="NCBIfam" id="TIGR00981">
    <property type="entry name" value="rpsL_bact"/>
    <property type="match status" value="1"/>
</dbReference>
<dbReference type="PANTHER" id="PTHR11652">
    <property type="entry name" value="30S RIBOSOMAL PROTEIN S12 FAMILY MEMBER"/>
    <property type="match status" value="1"/>
</dbReference>
<dbReference type="Pfam" id="PF00164">
    <property type="entry name" value="Ribosom_S12_S23"/>
    <property type="match status" value="1"/>
</dbReference>
<dbReference type="PIRSF" id="PIRSF002133">
    <property type="entry name" value="Ribosomal_S12/S23"/>
    <property type="match status" value="1"/>
</dbReference>
<dbReference type="PRINTS" id="PR01034">
    <property type="entry name" value="RIBOSOMALS12"/>
</dbReference>
<dbReference type="SUPFAM" id="SSF50249">
    <property type="entry name" value="Nucleic acid-binding proteins"/>
    <property type="match status" value="1"/>
</dbReference>
<dbReference type="PROSITE" id="PS00055">
    <property type="entry name" value="RIBOSOMAL_S12"/>
    <property type="match status" value="1"/>
</dbReference>
<protein>
    <recommendedName>
        <fullName evidence="4">Small ribosomal subunit protein uS12</fullName>
    </recommendedName>
    <alternativeName>
        <fullName>30S ribosomal protein S12</fullName>
    </alternativeName>
</protein>
<keyword id="KW-0002">3D-structure</keyword>
<keyword id="KW-0046">Antibiotic resistance</keyword>
<keyword id="KW-1185">Reference proteome</keyword>
<keyword id="KW-0687">Ribonucleoprotein</keyword>
<keyword id="KW-0689">Ribosomal protein</keyword>
<keyword id="KW-0694">RNA-binding</keyword>
<keyword id="KW-0699">rRNA-binding</keyword>
<keyword id="KW-0820">tRNA-binding</keyword>
<accession>P9WH63</accession>
<accession>L0T4E7</accession>
<accession>P41196</accession>
<accession>Q933X1</accession>
<accession>Q93MR7</accession>
<accession>Q93MR8</accession>
<accession>Q93T44</accession>
<name>RS12_MYCTU</name>
<proteinExistence type="evidence at protein level"/>
<comment type="function">
    <text evidence="1">With S4 and S5 plays an important role in translational accuracy.</text>
</comment>
<comment type="function">
    <text evidence="1">Interacts with and stabilizes bases of the 16S rRNA that are involved in tRNA selection in the A site and with the mRNA backbone. Located at the interface of the 30S and 50S subunits, it traverses the body of the 30S subunit contacting proteins on the other side and probably holding the rRNA structure together. The combined cluster of proteins S8, S12 and S17 appears to hold together the shoulder and platform of the 30S subunit (By similarity).</text>
</comment>
<comment type="subunit">
    <text evidence="1">Part of the 30S ribosomal subunit. Contacts proteins S8 and S17. May interact with IF1 in the 30S initiation complex (By similarity).</text>
</comment>
<comment type="similarity">
    <text evidence="4">Belongs to the universal ribosomal protein uS12 family.</text>
</comment>
<comment type="caution">
    <text evidence="4">Because the enzyme that would modify Asp-89 to 3-methylthioaspartic acid has not been found in the proteome of this organism, that modification is not predicted.</text>
</comment>
<evidence type="ECO:0000250" key="1"/>
<evidence type="ECO:0000256" key="2">
    <source>
        <dbReference type="SAM" id="MobiDB-lite"/>
    </source>
</evidence>
<evidence type="ECO:0000269" key="3">
    <source ref="8"/>
</evidence>
<evidence type="ECO:0000305" key="4"/>
<reference key="1">
    <citation type="journal article" date="1993" name="Mol. Microbiol.">
        <title>Molecular basis of streptomycin resistance in Mycobacterium tuberculosis: alterations of the ribosomal protein S12 gene and point mutations within a functional 16S ribosomal RNA pseudoknot.</title>
        <authorList>
            <person name="Finken M."/>
            <person name="Kirschner P."/>
            <person name="Meier A."/>
            <person name="Wrede A."/>
            <person name="Boettger E.C."/>
        </authorList>
    </citation>
    <scope>NUCLEOTIDE SEQUENCE [GENOMIC DNA]</scope>
    <scope>VARIANTS STREPTOMYCIN RESISTANT</scope>
</reference>
<reference key="2">
    <citation type="journal article" date="1993" name="Mol. Microbiol.">
        <title>The rpsL gene and streptomycin resistance in single and multiple drug-resistant strains of Mycobacterium tuberculosis.</title>
        <authorList>
            <person name="Nair J."/>
            <person name="Rouse D.A."/>
            <person name="Bai G.H."/>
            <person name="Morris S.L."/>
        </authorList>
    </citation>
    <scope>NUCLEOTIDE SEQUENCE [GENOMIC DNA]</scope>
    <source>
        <strain>ATCC 25618 / H37Rv</strain>
    </source>
</reference>
<reference key="3">
    <citation type="journal article" date="1994" name="Antimicrob. Agents Chemother.">
        <title>Streptomycin resistance in mycobacteria.</title>
        <authorList>
            <person name="Honore N."/>
            <person name="Cole S.T."/>
        </authorList>
    </citation>
    <scope>NUCLEOTIDE SEQUENCE [GENOMIC DNA]</scope>
    <source>
        <strain>ATCC 25618 / H37Rv</strain>
    </source>
</reference>
<reference key="4">
    <citation type="journal article" date="1998" name="Nature">
        <title>Deciphering the biology of Mycobacterium tuberculosis from the complete genome sequence.</title>
        <authorList>
            <person name="Cole S.T."/>
            <person name="Brosch R."/>
            <person name="Parkhill J."/>
            <person name="Garnier T."/>
            <person name="Churcher C.M."/>
            <person name="Harris D.E."/>
            <person name="Gordon S.V."/>
            <person name="Eiglmeier K."/>
            <person name="Gas S."/>
            <person name="Barry C.E. III"/>
            <person name="Tekaia F."/>
            <person name="Badcock K."/>
            <person name="Basham D."/>
            <person name="Brown D."/>
            <person name="Chillingworth T."/>
            <person name="Connor R."/>
            <person name="Davies R.M."/>
            <person name="Devlin K."/>
            <person name="Feltwell T."/>
            <person name="Gentles S."/>
            <person name="Hamlin N."/>
            <person name="Holroyd S."/>
            <person name="Hornsby T."/>
            <person name="Jagels K."/>
            <person name="Krogh A."/>
            <person name="McLean J."/>
            <person name="Moule S."/>
            <person name="Murphy L.D."/>
            <person name="Oliver S."/>
            <person name="Osborne J."/>
            <person name="Quail M.A."/>
            <person name="Rajandream M.A."/>
            <person name="Rogers J."/>
            <person name="Rutter S."/>
            <person name="Seeger K."/>
            <person name="Skelton S."/>
            <person name="Squares S."/>
            <person name="Squares R."/>
            <person name="Sulston J.E."/>
            <person name="Taylor K."/>
            <person name="Whitehead S."/>
            <person name="Barrell B.G."/>
        </authorList>
    </citation>
    <scope>NUCLEOTIDE SEQUENCE [LARGE SCALE GENOMIC DNA]</scope>
    <source>
        <strain>ATCC 25618 / H37Rv</strain>
    </source>
</reference>
<reference key="5">
    <citation type="submission" date="2001-07" db="EMBL/GenBank/DDBJ databases">
        <title>Mutations associated to streptomycin resistant strains of Mycobacterium tuberculosis isolated in Italy.</title>
        <authorList>
            <person name="Orru G."/>
            <person name="Iona E."/>
            <person name="Vicidomini S."/>
            <person name="Oggioni M.R."/>
            <person name="Fattorini L."/>
            <person name="Orefici G."/>
            <person name="Pozzi G."/>
        </authorList>
    </citation>
    <scope>NUCLEOTIDE SEQUENCE [GENOMIC DNA]</scope>
    <source>
        <strain>An03</strain>
        <strain>F05</strain>
        <strain>F12</strain>
        <strain>F18</strain>
    </source>
</reference>
<reference key="6">
    <citation type="journal article" date="2011" name="Mol. Cell. Proteomics">
        <title>Proteogenomic analysis of Mycobacterium tuberculosis by high resolution mass spectrometry.</title>
        <authorList>
            <person name="Kelkar D.S."/>
            <person name="Kumar D."/>
            <person name="Kumar P."/>
            <person name="Balakrishnan L."/>
            <person name="Muthusamy B."/>
            <person name="Yadav A.K."/>
            <person name="Shrivastava P."/>
            <person name="Marimuthu A."/>
            <person name="Anand S."/>
            <person name="Sundaram H."/>
            <person name="Kingsbury R."/>
            <person name="Harsha H.C."/>
            <person name="Nair B."/>
            <person name="Prasad T.S."/>
            <person name="Chauhan D.S."/>
            <person name="Katoch K."/>
            <person name="Katoch V.M."/>
            <person name="Kumar P."/>
            <person name="Chaerkady R."/>
            <person name="Ramachandran S."/>
            <person name="Dash D."/>
            <person name="Pandey A."/>
        </authorList>
    </citation>
    <scope>IDENTIFICATION BY MASS SPECTROMETRY [LARGE SCALE ANALYSIS]</scope>
    <source>
        <strain>ATCC 25618 / H37Rv</strain>
    </source>
</reference>
<reference key="7">
    <citation type="submission" date="2002-09" db="EMBL/GenBank/DDBJ databases">
        <title>The allelic profiles of multidrug-resistant Mycobacterium tuberculosis isolates from Taiwan.</title>
        <authorList>
            <person name="Shi Z.-Y."/>
            <person name="Lee K."/>
            <person name="Hu C.-H."/>
            <person name="Liu M.-F."/>
        </authorList>
    </citation>
    <scope>VARIANTS STREPTOMYCIN RESISTANT</scope>
    <source>
        <strain>C37</strain>
        <strain>C9</strain>
        <strain>TCVGH1</strain>
        <strain>TCVGH21</strain>
        <strain>TCVGH25</strain>
    </source>
</reference>
<reference key="8">
    <citation type="submission" date="2001-04" db="EMBL/GenBank/DDBJ databases">
        <authorList>
            <person name="Hainan H."/>
            <person name="Jinxiang H."/>
            <person name="Changzheng S.S."/>
        </authorList>
    </citation>
    <scope>NUCLEOTIDE SEQUENCE [GENOMIC DNA] OF 25-104</scope>
    <scope>VARIANT THR-43</scope>
</reference>
<feature type="chain" id="PRO_0000146272" description="Small ribosomal subunit protein uS12">
    <location>
        <begin position="1"/>
        <end position="124"/>
    </location>
</feature>
<feature type="region of interest" description="Disordered" evidence="2">
    <location>
        <begin position="105"/>
        <end position="124"/>
    </location>
</feature>
<feature type="compositionally biased region" description="Basic residues" evidence="2">
    <location>
        <begin position="108"/>
        <end position="118"/>
    </location>
</feature>
<feature type="sequence variant" description="In strain: 9106, 9181, An03, F12, F18 and TCVGH21; resistant to streptomycin.">
    <original>K</original>
    <variation>R</variation>
    <location>
        <position position="43"/>
    </location>
</feature>
<feature type="sequence variant" description="In strain: TCVGH25; probably resistant to streptomycin." evidence="3">
    <original>K</original>
    <variation>T</variation>
    <location>
        <position position="43"/>
    </location>
</feature>
<feature type="sequence variant" description="In strain: F05; resistant to streptomycin.">
    <original>K</original>
    <variation>Q</variation>
    <location>
        <position position="88"/>
    </location>
</feature>
<feature type="sequence variant" description="In strain: C37; probably resistant to streptomycin.">
    <original>K</original>
    <variation>R</variation>
    <location>
        <position position="88"/>
    </location>
</feature>
<feature type="sequence variant" description="In strain: F18; resistant to streptomycin.">
    <original>K</original>
    <variation>T</variation>
    <location>
        <position position="88"/>
    </location>
</feature>